<dbReference type="EMBL" id="AY008283">
    <property type="protein sequence ID" value="AAG21694.1"/>
    <property type="molecule type" value="mRNA"/>
</dbReference>
<dbReference type="EMBL" id="AY157580">
    <property type="protein sequence ID" value="AAO13164.1"/>
    <property type="molecule type" value="mRNA"/>
</dbReference>
<dbReference type="EMBL" id="AY358696">
    <property type="protein sequence ID" value="AAQ89059.1"/>
    <property type="molecule type" value="mRNA"/>
</dbReference>
<dbReference type="EMBL" id="AK075420">
    <property type="protein sequence ID" value="BAC11610.1"/>
    <property type="molecule type" value="mRNA"/>
</dbReference>
<dbReference type="EMBL" id="BC032296">
    <property type="protein sequence ID" value="AAH32296.1"/>
    <property type="molecule type" value="mRNA"/>
</dbReference>
<dbReference type="CCDS" id="CCDS41702.1">
    <molecule id="Q8N131-1"/>
</dbReference>
<dbReference type="RefSeq" id="NP_443164.2">
    <molecule id="Q8N131-1"/>
    <property type="nucleotide sequence ID" value="NM_052932.3"/>
</dbReference>
<dbReference type="BioGRID" id="125396">
    <property type="interactions" value="14"/>
</dbReference>
<dbReference type="FunCoup" id="Q8N131">
    <property type="interactions" value="30"/>
</dbReference>
<dbReference type="IntAct" id="Q8N131">
    <property type="interactions" value="8"/>
</dbReference>
<dbReference type="STRING" id="9606.ENSP00000381204"/>
<dbReference type="GlyCosmos" id="Q8N131">
    <property type="glycosylation" value="10 sites, 1 glycan"/>
</dbReference>
<dbReference type="GlyGen" id="Q8N131">
    <property type="glycosylation" value="14 sites, 3 O-linked glycans (5 sites)"/>
</dbReference>
<dbReference type="iPTMnet" id="Q8N131"/>
<dbReference type="PhosphoSitePlus" id="Q8N131"/>
<dbReference type="SwissPalm" id="Q8N131"/>
<dbReference type="BioMuta" id="TMEM123"/>
<dbReference type="DMDM" id="74728484"/>
<dbReference type="jPOST" id="Q8N131"/>
<dbReference type="MassIVE" id="Q8N131"/>
<dbReference type="PaxDb" id="9606-ENSP00000381204"/>
<dbReference type="PeptideAtlas" id="Q8N131"/>
<dbReference type="ProteomicsDB" id="71532">
    <molecule id="Q8N131-1"/>
</dbReference>
<dbReference type="ProteomicsDB" id="71533">
    <molecule id="Q8N131-2"/>
</dbReference>
<dbReference type="Pumba" id="Q8N131"/>
<dbReference type="Antibodypedia" id="31754">
    <property type="antibodies" value="152 antibodies from 27 providers"/>
</dbReference>
<dbReference type="DNASU" id="114908"/>
<dbReference type="Ensembl" id="ENST00000361236.7">
    <molecule id="Q8N131-2"/>
    <property type="protein sequence ID" value="ENSP00000355285.3"/>
    <property type="gene ID" value="ENSG00000152558.15"/>
</dbReference>
<dbReference type="Ensembl" id="ENST00000398136.7">
    <molecule id="Q8N131-1"/>
    <property type="protein sequence ID" value="ENSP00000381204.2"/>
    <property type="gene ID" value="ENSG00000152558.15"/>
</dbReference>
<dbReference type="GeneID" id="114908"/>
<dbReference type="KEGG" id="hsa:114908"/>
<dbReference type="MANE-Select" id="ENST00000398136.7">
    <property type="protein sequence ID" value="ENSP00000381204.2"/>
    <property type="RefSeq nucleotide sequence ID" value="NM_052932.3"/>
    <property type="RefSeq protein sequence ID" value="NP_443164.2"/>
</dbReference>
<dbReference type="UCSC" id="uc001pha.4">
    <molecule id="Q8N131-1"/>
    <property type="organism name" value="human"/>
</dbReference>
<dbReference type="AGR" id="HGNC:30138"/>
<dbReference type="CTD" id="114908"/>
<dbReference type="GeneCards" id="TMEM123"/>
<dbReference type="HGNC" id="HGNC:30138">
    <property type="gene designation" value="TMEM123"/>
</dbReference>
<dbReference type="HPA" id="ENSG00000152558">
    <property type="expression patterns" value="Low tissue specificity"/>
</dbReference>
<dbReference type="MIM" id="606356">
    <property type="type" value="gene"/>
</dbReference>
<dbReference type="neXtProt" id="NX_Q8N131"/>
<dbReference type="OpenTargets" id="ENSG00000152558"/>
<dbReference type="PharmGKB" id="PA143485643"/>
<dbReference type="VEuPathDB" id="HostDB:ENSG00000152558"/>
<dbReference type="eggNOG" id="ENOG502SAV2">
    <property type="taxonomic scope" value="Eukaryota"/>
</dbReference>
<dbReference type="GeneTree" id="ENSGT00530000063929"/>
<dbReference type="InParanoid" id="Q8N131"/>
<dbReference type="OMA" id="FSANLCD"/>
<dbReference type="OrthoDB" id="6160056at2759"/>
<dbReference type="PAN-GO" id="Q8N131">
    <property type="GO annotations" value="1 GO annotation based on evolutionary models"/>
</dbReference>
<dbReference type="PhylomeDB" id="Q8N131"/>
<dbReference type="TreeFam" id="TF350123"/>
<dbReference type="PathwayCommons" id="Q8N131"/>
<dbReference type="SignaLink" id="Q8N131"/>
<dbReference type="BioGRID-ORCS" id="114908">
    <property type="hits" value="13 hits in 1163 CRISPR screens"/>
</dbReference>
<dbReference type="ChiTaRS" id="TMEM123">
    <property type="organism name" value="human"/>
</dbReference>
<dbReference type="GeneWiki" id="TMEM123"/>
<dbReference type="GenomeRNAi" id="114908"/>
<dbReference type="Pharos" id="Q8N131">
    <property type="development level" value="Tbio"/>
</dbReference>
<dbReference type="PRO" id="PR:Q8N131"/>
<dbReference type="Proteomes" id="UP000005640">
    <property type="component" value="Chromosome 11"/>
</dbReference>
<dbReference type="RNAct" id="Q8N131">
    <property type="molecule type" value="protein"/>
</dbReference>
<dbReference type="Bgee" id="ENSG00000152558">
    <property type="expression patterns" value="Expressed in palpebral conjunctiva and 210 other cell types or tissues"/>
</dbReference>
<dbReference type="ExpressionAtlas" id="Q8N131">
    <property type="expression patterns" value="baseline and differential"/>
</dbReference>
<dbReference type="GO" id="GO:0031410">
    <property type="term" value="C:cytoplasmic vesicle"/>
    <property type="evidence" value="ECO:0000318"/>
    <property type="project" value="GO_Central"/>
</dbReference>
<dbReference type="GO" id="GO:0009897">
    <property type="term" value="C:external side of plasma membrane"/>
    <property type="evidence" value="ECO:0000314"/>
    <property type="project" value="UniProtKB"/>
</dbReference>
<dbReference type="GO" id="GO:0016020">
    <property type="term" value="C:membrane"/>
    <property type="evidence" value="ECO:0000303"/>
    <property type="project" value="UniProtKB"/>
</dbReference>
<dbReference type="GO" id="GO:0038023">
    <property type="term" value="F:signaling receptor activity"/>
    <property type="evidence" value="ECO:0000303"/>
    <property type="project" value="UniProtKB"/>
</dbReference>
<dbReference type="InterPro" id="IPR007947">
    <property type="entry name" value="CD164_MGC24"/>
</dbReference>
<dbReference type="PANTHER" id="PTHR11337">
    <property type="entry name" value="MUCIN/PORIMIN"/>
    <property type="match status" value="1"/>
</dbReference>
<dbReference type="PANTHER" id="PTHR11337:SF14">
    <property type="entry name" value="PORIMIN"/>
    <property type="match status" value="1"/>
</dbReference>
<dbReference type="Pfam" id="PF05283">
    <property type="entry name" value="MGC-24"/>
    <property type="match status" value="1"/>
</dbReference>
<protein>
    <recommendedName>
        <fullName>Porimin</fullName>
    </recommendedName>
    <alternativeName>
        <fullName>Keratinocytes-associated transmembrane protein 3</fullName>
        <shortName>KCT-3</shortName>
    </alternativeName>
    <alternativeName>
        <fullName>Pro-oncosis receptor inducing membrane injury</fullName>
    </alternativeName>
    <alternativeName>
        <fullName>Transmembrane protein 123</fullName>
    </alternativeName>
</protein>
<name>PORIM_HUMAN</name>
<feature type="signal peptide">
    <location>
        <begin position="1"/>
        <end position="26"/>
    </location>
</feature>
<feature type="chain" id="PRO_0000045058" description="Porimin">
    <location>
        <begin position="27"/>
        <end position="208"/>
    </location>
</feature>
<feature type="topological domain" description="Extracellular" evidence="1">
    <location>
        <begin position="27"/>
        <end position="166"/>
    </location>
</feature>
<feature type="transmembrane region" description="Helical" evidence="1">
    <location>
        <begin position="167"/>
        <end position="187"/>
    </location>
</feature>
<feature type="topological domain" description="Cytoplasmic" evidence="1">
    <location>
        <begin position="188"/>
        <end position="208"/>
    </location>
</feature>
<feature type="region of interest" description="Disordered" evidence="2">
    <location>
        <begin position="42"/>
        <end position="125"/>
    </location>
</feature>
<feature type="compositionally biased region" description="Polar residues" evidence="2">
    <location>
        <begin position="42"/>
        <end position="57"/>
    </location>
</feature>
<feature type="compositionally biased region" description="Polar residues" evidence="2">
    <location>
        <begin position="65"/>
        <end position="107"/>
    </location>
</feature>
<feature type="compositionally biased region" description="Low complexity" evidence="2">
    <location>
        <begin position="108"/>
        <end position="122"/>
    </location>
</feature>
<feature type="glycosylation site" description="N-linked (GlcNAc...) asparagine" evidence="1">
    <location>
        <position position="46"/>
    </location>
</feature>
<feature type="glycosylation site" description="N-linked (GlcNAc...) asparagine" evidence="1">
    <location>
        <position position="50"/>
    </location>
</feature>
<feature type="glycosylation site" description="N-linked (GlcNAc...) asparagine" evidence="1">
    <location>
        <position position="64"/>
    </location>
</feature>
<feature type="glycosylation site" description="N-linked (GlcNAc...) asparagine" evidence="1">
    <location>
        <position position="68"/>
    </location>
</feature>
<feature type="glycosylation site" description="N-linked (GlcNAc...) asparagine" evidence="1">
    <location>
        <position position="83"/>
    </location>
</feature>
<feature type="glycosylation site" description="N-linked (GlcNAc...) asparagine" evidence="1">
    <location>
        <position position="96"/>
    </location>
</feature>
<feature type="glycosylation site" description="N-linked (GlcNAc...) asparagine" evidence="1">
    <location>
        <position position="106"/>
    </location>
</feature>
<feature type="glycosylation site" description="N-linked (GlcNAc...) asparagine" evidence="1">
    <location>
        <position position="124"/>
    </location>
</feature>
<feature type="glycosylation site" description="N-linked (GlcNAc...) asparagine" evidence="1">
    <location>
        <position position="138"/>
    </location>
</feature>
<feature type="splice variant" id="VSP_016605" description="In isoform 2." evidence="5">
    <location>
        <begin position="34"/>
        <end position="52"/>
    </location>
</feature>
<feature type="sequence variant" id="VAR_053023" description="In dbSNP:rs2155587.">
    <original>V</original>
    <variation>M</variation>
    <location>
        <position position="71"/>
    </location>
</feature>
<feature type="sequence variant" id="VAR_053024" description="In dbSNP:rs11547915.">
    <original>V</original>
    <variation>F</variation>
    <location>
        <position position="86"/>
    </location>
</feature>
<feature type="sequence variant" id="VAR_053025" description="In dbSNP:rs12288849.">
    <original>A</original>
    <variation>T</variation>
    <location>
        <position position="158"/>
    </location>
</feature>
<feature type="sequence conflict" description="In Ref. 2; AAO13164." evidence="6" ref="2">
    <original>V</original>
    <variation>A</variation>
    <location>
        <position position="19"/>
    </location>
</feature>
<sequence length="208" mass="21531">MGLGARGAWAALLLGTLQVLALLGAAHESAAMAASANIENSGLPHNSSANSTETLQHVPSDHTNETSNSTVKPPTSVASDSSNTTVTTMKPTAASNTTTPGMVSTNMTSTTLKSTPKTTSVSQNTSQISTSTMTVTHNSSVTSAASSVTITTTMHSEAKKGSKFDTGSFVGGIVLTLGVLSILYIGCKMYYSRRGIRYRTIDEHDAII</sequence>
<gene>
    <name type="primary">TMEM123</name>
    <name type="synonym">KCT3</name>
    <name type="ORF">PSEC0111</name>
    <name type="ORF">UNQ641/PRO1271</name>
</gene>
<proteinExistence type="evidence at protein level"/>
<reference key="1">
    <citation type="journal article" date="2001" name="Proc. Natl. Acad. Sci. U.S.A.">
        <title>Molecular cloning of Porimin, a novel cell surface receptor mediating oncotic cell death.</title>
        <authorList>
            <person name="Ma F."/>
            <person name="Zhang C."/>
            <person name="Prasad K.V.S."/>
            <person name="Freeman G.J."/>
            <person name="Schlossman S.F."/>
        </authorList>
    </citation>
    <scope>NUCLEOTIDE SEQUENCE [MRNA] (ISOFORM 2)</scope>
    <scope>FUNCTION IN ONCOSIS</scope>
    <scope>TISSUE SPECIFICITY</scope>
</reference>
<reference key="2">
    <citation type="journal article" date="2003" name="Br. J. Dermatol.">
        <title>Identification of novel genes for secreted and membrane-anchored proteins in human keratinocytes.</title>
        <authorList>
            <person name="Bonkobara M."/>
            <person name="Das A."/>
            <person name="Takao J."/>
            <person name="Cruz P.D. Jr."/>
            <person name="Ariizumi K."/>
        </authorList>
    </citation>
    <scope>NUCLEOTIDE SEQUENCE [MRNA] (ISOFORM 1)</scope>
    <scope>TISSUE SPECIFICITY</scope>
</reference>
<reference key="3">
    <citation type="journal article" date="2003" name="Genome Res.">
        <title>The secreted protein discovery initiative (SPDI), a large-scale effort to identify novel human secreted and transmembrane proteins: a bioinformatics assessment.</title>
        <authorList>
            <person name="Clark H.F."/>
            <person name="Gurney A.L."/>
            <person name="Abaya E."/>
            <person name="Baker K."/>
            <person name="Baldwin D.T."/>
            <person name="Brush J."/>
            <person name="Chen J."/>
            <person name="Chow B."/>
            <person name="Chui C."/>
            <person name="Crowley C."/>
            <person name="Currell B."/>
            <person name="Deuel B."/>
            <person name="Dowd P."/>
            <person name="Eaton D."/>
            <person name="Foster J.S."/>
            <person name="Grimaldi C."/>
            <person name="Gu Q."/>
            <person name="Hass P.E."/>
            <person name="Heldens S."/>
            <person name="Huang A."/>
            <person name="Kim H.S."/>
            <person name="Klimowski L."/>
            <person name="Jin Y."/>
            <person name="Johnson S."/>
            <person name="Lee J."/>
            <person name="Lewis L."/>
            <person name="Liao D."/>
            <person name="Mark M.R."/>
            <person name="Robbie E."/>
            <person name="Sanchez C."/>
            <person name="Schoenfeld J."/>
            <person name="Seshagiri S."/>
            <person name="Simmons L."/>
            <person name="Singh J."/>
            <person name="Smith V."/>
            <person name="Stinson J."/>
            <person name="Vagts A."/>
            <person name="Vandlen R.L."/>
            <person name="Watanabe C."/>
            <person name="Wieand D."/>
            <person name="Woods K."/>
            <person name="Xie M.-H."/>
            <person name="Yansura D.G."/>
            <person name="Yi S."/>
            <person name="Yu G."/>
            <person name="Yuan J."/>
            <person name="Zhang M."/>
            <person name="Zhang Z."/>
            <person name="Goddard A.D."/>
            <person name="Wood W.I."/>
            <person name="Godowski P.J."/>
            <person name="Gray A.M."/>
        </authorList>
    </citation>
    <scope>NUCLEOTIDE SEQUENCE [LARGE SCALE MRNA] (ISOFORM 1)</scope>
</reference>
<reference key="4">
    <citation type="journal article" date="2005" name="DNA Res.">
        <title>Signal sequence and keyword trap in silico for selection of full-length human cDNAs encoding secretion or membrane proteins from oligo-capped cDNA libraries.</title>
        <authorList>
            <person name="Otsuki T."/>
            <person name="Ota T."/>
            <person name="Nishikawa T."/>
            <person name="Hayashi K."/>
            <person name="Suzuki Y."/>
            <person name="Yamamoto J."/>
            <person name="Wakamatsu A."/>
            <person name="Kimura K."/>
            <person name="Sakamoto K."/>
            <person name="Hatano N."/>
            <person name="Kawai Y."/>
            <person name="Ishii S."/>
            <person name="Saito K."/>
            <person name="Kojima S."/>
            <person name="Sugiyama T."/>
            <person name="Ono T."/>
            <person name="Okano K."/>
            <person name="Yoshikawa Y."/>
            <person name="Aotsuka S."/>
            <person name="Sasaki N."/>
            <person name="Hattori A."/>
            <person name="Okumura K."/>
            <person name="Nagai K."/>
            <person name="Sugano S."/>
            <person name="Isogai T."/>
        </authorList>
    </citation>
    <scope>NUCLEOTIDE SEQUENCE [LARGE SCALE MRNA] (ISOFORM 1)</scope>
    <source>
        <tissue>Teratocarcinoma</tissue>
    </source>
</reference>
<reference key="5">
    <citation type="journal article" date="2004" name="Genome Res.">
        <title>The status, quality, and expansion of the NIH full-length cDNA project: the Mammalian Gene Collection (MGC).</title>
        <authorList>
            <consortium name="The MGC Project Team"/>
        </authorList>
    </citation>
    <scope>NUCLEOTIDE SEQUENCE [LARGE SCALE MRNA] (ISOFORM 1)</scope>
    <source>
        <tissue>Lymph</tissue>
    </source>
</reference>
<reference key="6">
    <citation type="journal article" date="2004" name="Protein Sci.">
        <title>Signal peptide prediction based on analysis of experimentally verified cleavage sites.</title>
        <authorList>
            <person name="Zhang Z."/>
            <person name="Henzel W.J."/>
        </authorList>
    </citation>
    <scope>PROTEIN SEQUENCE OF 27-60 (ISOFORM 2)</scope>
</reference>
<comment type="function">
    <text evidence="3">Implicated in oncotic cell death, characterized by cell swelling, organelle swelling, vacuolization and increased membrane permeability.</text>
</comment>
<comment type="interaction">
    <interactant intactId="EBI-749248">
        <id>Q8N131</id>
    </interactant>
    <interactant intactId="EBI-2557660">
        <id>Q9ULR0</id>
        <label>ISY1</label>
    </interactant>
    <organismsDiffer>false</organismsDiffer>
    <experiments>3</experiments>
</comment>
<comment type="interaction">
    <interactant intactId="EBI-749248">
        <id>Q8N131</id>
    </interactant>
    <interactant intactId="EBI-739552">
        <id>P43364</id>
        <label>MAGEA11</label>
    </interactant>
    <organismsDiffer>false</organismsDiffer>
    <experiments>4</experiments>
</comment>
<comment type="interaction">
    <interactant intactId="EBI-749248">
        <id>Q8N131</id>
    </interactant>
    <interactant intactId="EBI-10178634">
        <id>P43364-2</id>
        <label>MAGEA11</label>
    </interactant>
    <organismsDiffer>false</organismsDiffer>
    <experiments>3</experiments>
</comment>
<comment type="interaction">
    <interactant intactId="EBI-749248">
        <id>Q8N131</id>
    </interactant>
    <interactant intactId="EBI-744081">
        <id>Q96EQ0</id>
        <label>SGTB</label>
    </interactant>
    <organismsDiffer>false</organismsDiffer>
    <experiments>3</experiments>
</comment>
<comment type="interaction">
    <interactant intactId="EBI-749248">
        <id>Q8N131</id>
    </interactant>
    <interactant intactId="EBI-13322423">
        <id>Q96L03</id>
        <label>SPATA17</label>
    </interactant>
    <organismsDiffer>false</organismsDiffer>
    <experiments>3</experiments>
</comment>
<comment type="interaction">
    <interactant intactId="EBI-749248">
        <id>Q8N131</id>
    </interactant>
    <interactant intactId="EBI-947187">
        <id>Q9UHD9</id>
        <label>UBQLN2</label>
    </interactant>
    <organismsDiffer>false</organismsDiffer>
    <experiments>3</experiments>
</comment>
<comment type="interaction">
    <interactant intactId="EBI-749248">
        <id>Q8N131</id>
    </interactant>
    <interactant intactId="EBI-4403108">
        <id>Q8IWB7</id>
        <label>WDFY1</label>
    </interactant>
    <organismsDiffer>false</organismsDiffer>
    <experiments>2</experiments>
</comment>
<comment type="interaction">
    <interactant intactId="EBI-749248">
        <id>Q8N131</id>
    </interactant>
    <interactant intactId="EBI-25830993">
        <id>Q96EF9</id>
        <label>ZHX1-C8orf76</label>
    </interactant>
    <organismsDiffer>false</organismsDiffer>
    <experiments>3</experiments>
</comment>
<comment type="subcellular location">
    <subcellularLocation>
        <location evidence="6">Membrane</location>
        <topology evidence="6">Single-pass type I membrane protein</topology>
    </subcellularLocation>
</comment>
<comment type="alternative products">
    <event type="alternative splicing"/>
    <isoform>
        <id>Q8N131-1</id>
        <name>1</name>
        <sequence type="displayed"/>
    </isoform>
    <isoform>
        <id>Q8N131-2</id>
        <name>2</name>
        <sequence type="described" ref="VSP_016605"/>
    </isoform>
</comment>
<comment type="tissue specificity">
    <text evidence="3 4">Ubiquitous. Not expressed in ovary. Expressed in keratinocytes.</text>
</comment>
<comment type="similarity">
    <text evidence="6">Belongs to the CD164 family.</text>
</comment>
<organism>
    <name type="scientific">Homo sapiens</name>
    <name type="common">Human</name>
    <dbReference type="NCBI Taxonomy" id="9606"/>
    <lineage>
        <taxon>Eukaryota</taxon>
        <taxon>Metazoa</taxon>
        <taxon>Chordata</taxon>
        <taxon>Craniata</taxon>
        <taxon>Vertebrata</taxon>
        <taxon>Euteleostomi</taxon>
        <taxon>Mammalia</taxon>
        <taxon>Eutheria</taxon>
        <taxon>Euarchontoglires</taxon>
        <taxon>Primates</taxon>
        <taxon>Haplorrhini</taxon>
        <taxon>Catarrhini</taxon>
        <taxon>Hominidae</taxon>
        <taxon>Homo</taxon>
    </lineage>
</organism>
<keyword id="KW-0025">Alternative splicing</keyword>
<keyword id="KW-0903">Direct protein sequencing</keyword>
<keyword id="KW-0325">Glycoprotein</keyword>
<keyword id="KW-0472">Membrane</keyword>
<keyword id="KW-1267">Proteomics identification</keyword>
<keyword id="KW-0675">Receptor</keyword>
<keyword id="KW-1185">Reference proteome</keyword>
<keyword id="KW-0732">Signal</keyword>
<keyword id="KW-0812">Transmembrane</keyword>
<keyword id="KW-1133">Transmembrane helix</keyword>
<evidence type="ECO:0000255" key="1"/>
<evidence type="ECO:0000256" key="2">
    <source>
        <dbReference type="SAM" id="MobiDB-lite"/>
    </source>
</evidence>
<evidence type="ECO:0000269" key="3">
    <source>
    </source>
</evidence>
<evidence type="ECO:0000269" key="4">
    <source>
    </source>
</evidence>
<evidence type="ECO:0000303" key="5">
    <source>
    </source>
</evidence>
<evidence type="ECO:0000305" key="6"/>
<accession>Q8N131</accession>
<accession>Q8IWS2</accession>
<accession>Q96QV2</accession>